<keyword id="KW-0021">Allosteric enzyme</keyword>
<keyword id="KW-0067">ATP-binding</keyword>
<keyword id="KW-0319">Glycerol metabolism</keyword>
<keyword id="KW-0418">Kinase</keyword>
<keyword id="KW-0479">Metal-binding</keyword>
<keyword id="KW-0547">Nucleotide-binding</keyword>
<keyword id="KW-0808">Transferase</keyword>
<keyword id="KW-0862">Zinc</keyword>
<dbReference type="EC" id="2.7.1.30" evidence="1"/>
<dbReference type="EMBL" id="CP000647">
    <property type="protein sequence ID" value="ABR79396.1"/>
    <property type="molecule type" value="Genomic_DNA"/>
</dbReference>
<dbReference type="RefSeq" id="WP_002922944.1">
    <property type="nucleotide sequence ID" value="NC_009648.1"/>
</dbReference>
<dbReference type="SMR" id="A6TFR2"/>
<dbReference type="STRING" id="272620.KPN_04011"/>
<dbReference type="jPOST" id="A6TFR2"/>
<dbReference type="PaxDb" id="272620-KPN_04011"/>
<dbReference type="EnsemblBacteria" id="ABR79396">
    <property type="protein sequence ID" value="ABR79396"/>
    <property type="gene ID" value="KPN_04011"/>
</dbReference>
<dbReference type="KEGG" id="kpn:KPN_04011"/>
<dbReference type="HOGENOM" id="CLU_009281_2_3_6"/>
<dbReference type="BRENDA" id="2.7.1.30">
    <property type="organism ID" value="2817"/>
</dbReference>
<dbReference type="UniPathway" id="UPA00618">
    <property type="reaction ID" value="UER00672"/>
</dbReference>
<dbReference type="Proteomes" id="UP000000265">
    <property type="component" value="Chromosome"/>
</dbReference>
<dbReference type="GO" id="GO:0005829">
    <property type="term" value="C:cytosol"/>
    <property type="evidence" value="ECO:0007669"/>
    <property type="project" value="TreeGrafter"/>
</dbReference>
<dbReference type="GO" id="GO:0005524">
    <property type="term" value="F:ATP binding"/>
    <property type="evidence" value="ECO:0007669"/>
    <property type="project" value="UniProtKB-UniRule"/>
</dbReference>
<dbReference type="GO" id="GO:0004370">
    <property type="term" value="F:glycerol kinase activity"/>
    <property type="evidence" value="ECO:0000250"/>
    <property type="project" value="UniProtKB"/>
</dbReference>
<dbReference type="GO" id="GO:0046872">
    <property type="term" value="F:metal ion binding"/>
    <property type="evidence" value="ECO:0007669"/>
    <property type="project" value="UniProtKB-KW"/>
</dbReference>
<dbReference type="GO" id="GO:0019563">
    <property type="term" value="P:glycerol catabolic process"/>
    <property type="evidence" value="ECO:0007669"/>
    <property type="project" value="UniProtKB-UniRule"/>
</dbReference>
<dbReference type="GO" id="GO:0006071">
    <property type="term" value="P:glycerol metabolic process"/>
    <property type="evidence" value="ECO:0000250"/>
    <property type="project" value="UniProtKB"/>
</dbReference>
<dbReference type="GO" id="GO:0006072">
    <property type="term" value="P:glycerol-3-phosphate metabolic process"/>
    <property type="evidence" value="ECO:0007669"/>
    <property type="project" value="InterPro"/>
</dbReference>
<dbReference type="CDD" id="cd07769">
    <property type="entry name" value="ASKHA_NBD_FGGY_GK"/>
    <property type="match status" value="1"/>
</dbReference>
<dbReference type="FunFam" id="3.30.420.40:FF:000007">
    <property type="entry name" value="Glycerol kinase"/>
    <property type="match status" value="1"/>
</dbReference>
<dbReference type="FunFam" id="3.30.420.40:FF:000008">
    <property type="entry name" value="Glycerol kinase"/>
    <property type="match status" value="1"/>
</dbReference>
<dbReference type="Gene3D" id="3.30.420.40">
    <property type="match status" value="2"/>
</dbReference>
<dbReference type="HAMAP" id="MF_00186">
    <property type="entry name" value="Glycerol_kin"/>
    <property type="match status" value="1"/>
</dbReference>
<dbReference type="InterPro" id="IPR043129">
    <property type="entry name" value="ATPase_NBD"/>
</dbReference>
<dbReference type="InterPro" id="IPR000577">
    <property type="entry name" value="Carb_kinase_FGGY"/>
</dbReference>
<dbReference type="InterPro" id="IPR018483">
    <property type="entry name" value="Carb_kinase_FGGY_CS"/>
</dbReference>
<dbReference type="InterPro" id="IPR018485">
    <property type="entry name" value="FGGY_C"/>
</dbReference>
<dbReference type="InterPro" id="IPR018484">
    <property type="entry name" value="FGGY_N"/>
</dbReference>
<dbReference type="InterPro" id="IPR005999">
    <property type="entry name" value="Glycerol_kin"/>
</dbReference>
<dbReference type="NCBIfam" id="TIGR01311">
    <property type="entry name" value="glycerol_kin"/>
    <property type="match status" value="1"/>
</dbReference>
<dbReference type="NCBIfam" id="NF000756">
    <property type="entry name" value="PRK00047.1"/>
    <property type="match status" value="1"/>
</dbReference>
<dbReference type="PANTHER" id="PTHR10196:SF69">
    <property type="entry name" value="GLYCEROL KINASE"/>
    <property type="match status" value="1"/>
</dbReference>
<dbReference type="PANTHER" id="PTHR10196">
    <property type="entry name" value="SUGAR KINASE"/>
    <property type="match status" value="1"/>
</dbReference>
<dbReference type="Pfam" id="PF02782">
    <property type="entry name" value="FGGY_C"/>
    <property type="match status" value="1"/>
</dbReference>
<dbReference type="Pfam" id="PF00370">
    <property type="entry name" value="FGGY_N"/>
    <property type="match status" value="1"/>
</dbReference>
<dbReference type="PIRSF" id="PIRSF000538">
    <property type="entry name" value="GlpK"/>
    <property type="match status" value="1"/>
</dbReference>
<dbReference type="SUPFAM" id="SSF53067">
    <property type="entry name" value="Actin-like ATPase domain"/>
    <property type="match status" value="2"/>
</dbReference>
<dbReference type="PROSITE" id="PS00933">
    <property type="entry name" value="FGGY_KINASES_1"/>
    <property type="match status" value="1"/>
</dbReference>
<dbReference type="PROSITE" id="PS00445">
    <property type="entry name" value="FGGY_KINASES_2"/>
    <property type="match status" value="1"/>
</dbReference>
<proteinExistence type="inferred from homology"/>
<accession>A6TFR2</accession>
<feature type="chain" id="PRO_1000020738" description="Glycerol kinase">
    <location>
        <begin position="1"/>
        <end position="503"/>
    </location>
</feature>
<feature type="binding site" evidence="1">
    <location>
        <position position="14"/>
    </location>
    <ligand>
        <name>ADP</name>
        <dbReference type="ChEBI" id="CHEBI:456216"/>
    </ligand>
</feature>
<feature type="binding site" evidence="1">
    <location>
        <position position="14"/>
    </location>
    <ligand>
        <name>ATP</name>
        <dbReference type="ChEBI" id="CHEBI:30616"/>
    </ligand>
</feature>
<feature type="binding site" evidence="1">
    <location>
        <position position="14"/>
    </location>
    <ligand>
        <name>sn-glycerol 3-phosphate</name>
        <dbReference type="ChEBI" id="CHEBI:57597"/>
    </ligand>
</feature>
<feature type="binding site" evidence="1">
    <location>
        <position position="15"/>
    </location>
    <ligand>
        <name>ATP</name>
        <dbReference type="ChEBI" id="CHEBI:30616"/>
    </ligand>
</feature>
<feature type="binding site" evidence="1">
    <location>
        <position position="16"/>
    </location>
    <ligand>
        <name>ATP</name>
        <dbReference type="ChEBI" id="CHEBI:30616"/>
    </ligand>
</feature>
<feature type="binding site" evidence="1">
    <location>
        <position position="18"/>
    </location>
    <ligand>
        <name>ADP</name>
        <dbReference type="ChEBI" id="CHEBI:456216"/>
    </ligand>
</feature>
<feature type="binding site" evidence="1">
    <location>
        <position position="84"/>
    </location>
    <ligand>
        <name>glycerol</name>
        <dbReference type="ChEBI" id="CHEBI:17754"/>
    </ligand>
</feature>
<feature type="binding site" evidence="1">
    <location>
        <position position="84"/>
    </location>
    <ligand>
        <name>sn-glycerol 3-phosphate</name>
        <dbReference type="ChEBI" id="CHEBI:57597"/>
    </ligand>
</feature>
<feature type="binding site" evidence="1">
    <location>
        <position position="85"/>
    </location>
    <ligand>
        <name>glycerol</name>
        <dbReference type="ChEBI" id="CHEBI:17754"/>
    </ligand>
</feature>
<feature type="binding site" evidence="1">
    <location>
        <position position="85"/>
    </location>
    <ligand>
        <name>sn-glycerol 3-phosphate</name>
        <dbReference type="ChEBI" id="CHEBI:57597"/>
    </ligand>
</feature>
<feature type="binding site" evidence="1">
    <location>
        <position position="136"/>
    </location>
    <ligand>
        <name>glycerol</name>
        <dbReference type="ChEBI" id="CHEBI:17754"/>
    </ligand>
</feature>
<feature type="binding site" evidence="1">
    <location>
        <position position="136"/>
    </location>
    <ligand>
        <name>sn-glycerol 3-phosphate</name>
        <dbReference type="ChEBI" id="CHEBI:57597"/>
    </ligand>
</feature>
<feature type="binding site" evidence="1">
    <location>
        <position position="246"/>
    </location>
    <ligand>
        <name>glycerol</name>
        <dbReference type="ChEBI" id="CHEBI:17754"/>
    </ligand>
</feature>
<feature type="binding site" evidence="1">
    <location>
        <position position="246"/>
    </location>
    <ligand>
        <name>sn-glycerol 3-phosphate</name>
        <dbReference type="ChEBI" id="CHEBI:57597"/>
    </ligand>
</feature>
<feature type="binding site" evidence="1">
    <location>
        <position position="247"/>
    </location>
    <ligand>
        <name>glycerol</name>
        <dbReference type="ChEBI" id="CHEBI:17754"/>
    </ligand>
</feature>
<feature type="binding site" evidence="1">
    <location>
        <position position="268"/>
    </location>
    <ligand>
        <name>ADP</name>
        <dbReference type="ChEBI" id="CHEBI:456216"/>
    </ligand>
</feature>
<feature type="binding site" evidence="1">
    <location>
        <position position="268"/>
    </location>
    <ligand>
        <name>ATP</name>
        <dbReference type="ChEBI" id="CHEBI:30616"/>
    </ligand>
</feature>
<feature type="binding site" evidence="1">
    <location>
        <position position="311"/>
    </location>
    <ligand>
        <name>ADP</name>
        <dbReference type="ChEBI" id="CHEBI:456216"/>
    </ligand>
</feature>
<feature type="binding site" evidence="1">
    <location>
        <position position="311"/>
    </location>
    <ligand>
        <name>ATP</name>
        <dbReference type="ChEBI" id="CHEBI:30616"/>
    </ligand>
</feature>
<feature type="binding site" evidence="1">
    <location>
        <position position="315"/>
    </location>
    <ligand>
        <name>ATP</name>
        <dbReference type="ChEBI" id="CHEBI:30616"/>
    </ligand>
</feature>
<feature type="binding site" evidence="1">
    <location>
        <position position="412"/>
    </location>
    <ligand>
        <name>ADP</name>
        <dbReference type="ChEBI" id="CHEBI:456216"/>
    </ligand>
</feature>
<feature type="binding site" evidence="1">
    <location>
        <position position="412"/>
    </location>
    <ligand>
        <name>ATP</name>
        <dbReference type="ChEBI" id="CHEBI:30616"/>
    </ligand>
</feature>
<feature type="binding site" evidence="1">
    <location>
        <position position="416"/>
    </location>
    <ligand>
        <name>ADP</name>
        <dbReference type="ChEBI" id="CHEBI:456216"/>
    </ligand>
</feature>
<gene>
    <name evidence="1" type="primary">glpK</name>
    <name type="ordered locus">KPN78578_39720</name>
    <name type="ORF">KPN_04011</name>
</gene>
<organism>
    <name type="scientific">Klebsiella pneumoniae subsp. pneumoniae (strain ATCC 700721 / MGH 78578)</name>
    <dbReference type="NCBI Taxonomy" id="272620"/>
    <lineage>
        <taxon>Bacteria</taxon>
        <taxon>Pseudomonadati</taxon>
        <taxon>Pseudomonadota</taxon>
        <taxon>Gammaproteobacteria</taxon>
        <taxon>Enterobacterales</taxon>
        <taxon>Enterobacteriaceae</taxon>
        <taxon>Klebsiella/Raoultella group</taxon>
        <taxon>Klebsiella</taxon>
        <taxon>Klebsiella pneumoniae complex</taxon>
    </lineage>
</organism>
<evidence type="ECO:0000255" key="1">
    <source>
        <dbReference type="HAMAP-Rule" id="MF_00186"/>
    </source>
</evidence>
<reference key="1">
    <citation type="submission" date="2006-09" db="EMBL/GenBank/DDBJ databases">
        <authorList>
            <consortium name="The Klebsiella pneumonia Genome Sequencing Project"/>
            <person name="McClelland M."/>
            <person name="Sanderson E.K."/>
            <person name="Spieth J."/>
            <person name="Clifton W.S."/>
            <person name="Latreille P."/>
            <person name="Sabo A."/>
            <person name="Pepin K."/>
            <person name="Bhonagiri V."/>
            <person name="Porwollik S."/>
            <person name="Ali J."/>
            <person name="Wilson R.K."/>
        </authorList>
    </citation>
    <scope>NUCLEOTIDE SEQUENCE [LARGE SCALE GENOMIC DNA]</scope>
    <source>
        <strain>ATCC 700721 / MGH 78578</strain>
    </source>
</reference>
<sequence>MTDKKYIVALDQGTTSSRAVVMDHDANIVSVSQREFEQIYPKPGWVEHDPMEIWASQSSTLVEALAKADINSDQIAAIGITNQRETVVVWERETGKPIYNAIVWQCRRTAEICEQLKRDGMEEYIRKATGLVVDPYFSGTKVKWILDHVEGSRERAKRGELLFGTVDTWLIWKMTQGRVHVTDYTNASRTMLFNIHDLDWDDKMLDALDIPRAMLPEVRKSSEVYGQTNIGGKGGTRIPIAGIAGDQQAALFGQLCVKEGMAKNTYGTGCFMLMNTGEKAVTSTHGLLTTIACGPRGEVNYALEGAVFMAGASIQWLRDEMKLISDAFDSEYFATKVKDTNGVYVVPAFTGLGAPYWDPYARGAIFGLTRGVNSNHIIRATLESIAFQTRDVLEAMQADSGIRLHALRVDGGAVANNFLMQFQSDILGTRVERPEVREVTALGAAYLAGLAVGFWQNLDELQEKAVIEREFRPGIETTERNYRYSGWKKAVKRALAWEEHDEA</sequence>
<comment type="function">
    <text evidence="1">Key enzyme in the regulation of glycerol uptake and metabolism. Catalyzes the phosphorylation of glycerol to yield sn-glycerol 3-phosphate.</text>
</comment>
<comment type="catalytic activity">
    <reaction evidence="1">
        <text>glycerol + ATP = sn-glycerol 3-phosphate + ADP + H(+)</text>
        <dbReference type="Rhea" id="RHEA:21644"/>
        <dbReference type="ChEBI" id="CHEBI:15378"/>
        <dbReference type="ChEBI" id="CHEBI:17754"/>
        <dbReference type="ChEBI" id="CHEBI:30616"/>
        <dbReference type="ChEBI" id="CHEBI:57597"/>
        <dbReference type="ChEBI" id="CHEBI:456216"/>
        <dbReference type="EC" id="2.7.1.30"/>
    </reaction>
</comment>
<comment type="activity regulation">
    <text evidence="1">Activity of this regulatory enzyme is affected by several metabolites. Allosterically and non-competitively inhibited by fructose 1,6-bisphosphate (FBP) and unphosphorylated phosphocarrier protein EIIA-Glc (III-Glc), an integral component of the bacterial phosphotransferase (PTS) system.</text>
</comment>
<comment type="pathway">
    <text evidence="1">Polyol metabolism; glycerol degradation via glycerol kinase pathway; sn-glycerol 3-phosphate from glycerol: step 1/1.</text>
</comment>
<comment type="subunit">
    <text evidence="1">Homotetramer and homodimer (in equilibrium). Heterodimer with EIIA-Glc. Binds 1 zinc ion per glycerol kinase EIIA-Glc dimer. The zinc ion is important for dimerization.</text>
</comment>
<comment type="similarity">
    <text evidence="1">Belongs to the FGGY kinase family.</text>
</comment>
<protein>
    <recommendedName>
        <fullName evidence="1">Glycerol kinase</fullName>
        <ecNumber evidence="1">2.7.1.30</ecNumber>
    </recommendedName>
    <alternativeName>
        <fullName evidence="1">ATP:glycerol 3-phosphotransferase</fullName>
    </alternativeName>
    <alternativeName>
        <fullName evidence="1">Glycerokinase</fullName>
        <shortName evidence="1">GK</shortName>
    </alternativeName>
</protein>
<name>GLPK_KLEP7</name>